<protein>
    <recommendedName>
        <fullName evidence="1">UDP-N-acetylenolpyruvoylglucosamine reductase</fullName>
        <ecNumber evidence="1">1.3.1.98</ecNumber>
    </recommendedName>
    <alternativeName>
        <fullName evidence="1">UDP-N-acetylmuramate dehydrogenase</fullName>
    </alternativeName>
</protein>
<dbReference type="EC" id="1.3.1.98" evidence="1"/>
<dbReference type="EMBL" id="CP001364">
    <property type="protein sequence ID" value="ACM52245.1"/>
    <property type="molecule type" value="Genomic_DNA"/>
</dbReference>
<dbReference type="SMR" id="B9LKI9"/>
<dbReference type="KEGG" id="chl:Chy400_0816"/>
<dbReference type="HOGENOM" id="CLU_035304_1_1_0"/>
<dbReference type="OrthoDB" id="9804753at2"/>
<dbReference type="UniPathway" id="UPA00219"/>
<dbReference type="GO" id="GO:0005829">
    <property type="term" value="C:cytosol"/>
    <property type="evidence" value="ECO:0007669"/>
    <property type="project" value="TreeGrafter"/>
</dbReference>
<dbReference type="GO" id="GO:0071949">
    <property type="term" value="F:FAD binding"/>
    <property type="evidence" value="ECO:0007669"/>
    <property type="project" value="InterPro"/>
</dbReference>
<dbReference type="GO" id="GO:0008762">
    <property type="term" value="F:UDP-N-acetylmuramate dehydrogenase activity"/>
    <property type="evidence" value="ECO:0007669"/>
    <property type="project" value="UniProtKB-UniRule"/>
</dbReference>
<dbReference type="GO" id="GO:0051301">
    <property type="term" value="P:cell division"/>
    <property type="evidence" value="ECO:0007669"/>
    <property type="project" value="UniProtKB-KW"/>
</dbReference>
<dbReference type="GO" id="GO:0071555">
    <property type="term" value="P:cell wall organization"/>
    <property type="evidence" value="ECO:0007669"/>
    <property type="project" value="UniProtKB-KW"/>
</dbReference>
<dbReference type="GO" id="GO:0009252">
    <property type="term" value="P:peptidoglycan biosynthetic process"/>
    <property type="evidence" value="ECO:0007669"/>
    <property type="project" value="UniProtKB-UniRule"/>
</dbReference>
<dbReference type="GO" id="GO:0008360">
    <property type="term" value="P:regulation of cell shape"/>
    <property type="evidence" value="ECO:0007669"/>
    <property type="project" value="UniProtKB-KW"/>
</dbReference>
<dbReference type="Gene3D" id="3.30.465.10">
    <property type="match status" value="1"/>
</dbReference>
<dbReference type="Gene3D" id="3.90.78.10">
    <property type="entry name" value="UDP-N-acetylenolpyruvoylglucosamine reductase, C-terminal domain"/>
    <property type="match status" value="1"/>
</dbReference>
<dbReference type="Gene3D" id="3.30.43.10">
    <property type="entry name" value="Uridine Diphospho-n-acetylenolpyruvylglucosamine Reductase, domain 2"/>
    <property type="match status" value="1"/>
</dbReference>
<dbReference type="HAMAP" id="MF_00037">
    <property type="entry name" value="MurB"/>
    <property type="match status" value="1"/>
</dbReference>
<dbReference type="InterPro" id="IPR016166">
    <property type="entry name" value="FAD-bd_PCMH"/>
</dbReference>
<dbReference type="InterPro" id="IPR036318">
    <property type="entry name" value="FAD-bd_PCMH-like_sf"/>
</dbReference>
<dbReference type="InterPro" id="IPR016167">
    <property type="entry name" value="FAD-bd_PCMH_sub1"/>
</dbReference>
<dbReference type="InterPro" id="IPR016169">
    <property type="entry name" value="FAD-bd_PCMH_sub2"/>
</dbReference>
<dbReference type="InterPro" id="IPR003170">
    <property type="entry name" value="MurB"/>
</dbReference>
<dbReference type="InterPro" id="IPR011601">
    <property type="entry name" value="MurB_C"/>
</dbReference>
<dbReference type="InterPro" id="IPR036635">
    <property type="entry name" value="MurB_C_sf"/>
</dbReference>
<dbReference type="InterPro" id="IPR006094">
    <property type="entry name" value="Oxid_FAD_bind_N"/>
</dbReference>
<dbReference type="NCBIfam" id="TIGR00179">
    <property type="entry name" value="murB"/>
    <property type="match status" value="1"/>
</dbReference>
<dbReference type="NCBIfam" id="NF010480">
    <property type="entry name" value="PRK13905.1"/>
    <property type="match status" value="1"/>
</dbReference>
<dbReference type="PANTHER" id="PTHR21071">
    <property type="entry name" value="UDP-N-ACETYLENOLPYRUVOYLGLUCOSAMINE REDUCTASE"/>
    <property type="match status" value="1"/>
</dbReference>
<dbReference type="PANTHER" id="PTHR21071:SF4">
    <property type="entry name" value="UDP-N-ACETYLENOLPYRUVOYLGLUCOSAMINE REDUCTASE"/>
    <property type="match status" value="1"/>
</dbReference>
<dbReference type="Pfam" id="PF01565">
    <property type="entry name" value="FAD_binding_4"/>
    <property type="match status" value="1"/>
</dbReference>
<dbReference type="Pfam" id="PF02873">
    <property type="entry name" value="MurB_C"/>
    <property type="match status" value="1"/>
</dbReference>
<dbReference type="SUPFAM" id="SSF56176">
    <property type="entry name" value="FAD-binding/transporter-associated domain-like"/>
    <property type="match status" value="1"/>
</dbReference>
<dbReference type="SUPFAM" id="SSF56194">
    <property type="entry name" value="Uridine diphospho-N-Acetylenolpyruvylglucosamine reductase, MurB, C-terminal domain"/>
    <property type="match status" value="1"/>
</dbReference>
<dbReference type="PROSITE" id="PS51387">
    <property type="entry name" value="FAD_PCMH"/>
    <property type="match status" value="1"/>
</dbReference>
<name>MURB_CHLSY</name>
<sequence>MPVALPVTLYPDEPMARHSSWRAGGTARYYAEPATPDEAIALAAWAREQQLPLIWIGRGTNLLVRDEGFDGVIASYRGQRWELIEHGETAEVWIEAGAPMAGTARRLAAMGWAGLEWAEGLPGAVGGAIVGNAGCYGGSVAEVLITADLLLNGSECVEWSVHDLAYTYRESVLKQLLHTGIPPLVLAGRFRLQRGDPAALTARMKAIAAERKQKTPAGSSCGSVFKNPAGDFAGRLIEAAGLKGVRIGDAEISTLHANYIINRGQARAADILALIDLARTKVADQFGITLQLEVRII</sequence>
<evidence type="ECO:0000255" key="1">
    <source>
        <dbReference type="HAMAP-Rule" id="MF_00037"/>
    </source>
</evidence>
<reference key="1">
    <citation type="submission" date="2009-01" db="EMBL/GenBank/DDBJ databases">
        <title>Complete sequence of Chloroflexus sp. Y-400-fl.</title>
        <authorList>
            <consortium name="US DOE Joint Genome Institute"/>
            <person name="Lucas S."/>
            <person name="Copeland A."/>
            <person name="Lapidus A."/>
            <person name="Glavina del Rio T."/>
            <person name="Dalin E."/>
            <person name="Tice H."/>
            <person name="Bruce D."/>
            <person name="Goodwin L."/>
            <person name="Pitluck S."/>
            <person name="Sims D."/>
            <person name="Kiss H."/>
            <person name="Brettin T."/>
            <person name="Detter J.C."/>
            <person name="Han C."/>
            <person name="Larimer F."/>
            <person name="Land M."/>
            <person name="Hauser L."/>
            <person name="Kyrpides N."/>
            <person name="Ovchinnikova G."/>
            <person name="Bryant D.A."/>
            <person name="Richardson P."/>
        </authorList>
    </citation>
    <scope>NUCLEOTIDE SEQUENCE [LARGE SCALE GENOMIC DNA]</scope>
    <source>
        <strain>ATCC 29364 / DSM 637 / Y-400-fl</strain>
    </source>
</reference>
<keyword id="KW-0131">Cell cycle</keyword>
<keyword id="KW-0132">Cell division</keyword>
<keyword id="KW-0133">Cell shape</keyword>
<keyword id="KW-0961">Cell wall biogenesis/degradation</keyword>
<keyword id="KW-0963">Cytoplasm</keyword>
<keyword id="KW-0274">FAD</keyword>
<keyword id="KW-0285">Flavoprotein</keyword>
<keyword id="KW-0521">NADP</keyword>
<keyword id="KW-0560">Oxidoreductase</keyword>
<keyword id="KW-0573">Peptidoglycan synthesis</keyword>
<organism>
    <name type="scientific">Chloroflexus aurantiacus (strain ATCC 29364 / DSM 637 / Y-400-fl)</name>
    <dbReference type="NCBI Taxonomy" id="480224"/>
    <lineage>
        <taxon>Bacteria</taxon>
        <taxon>Bacillati</taxon>
        <taxon>Chloroflexota</taxon>
        <taxon>Chloroflexia</taxon>
        <taxon>Chloroflexales</taxon>
        <taxon>Chloroflexineae</taxon>
        <taxon>Chloroflexaceae</taxon>
        <taxon>Chloroflexus</taxon>
    </lineage>
</organism>
<feature type="chain" id="PRO_1000191411" description="UDP-N-acetylenolpyruvoylglucosamine reductase">
    <location>
        <begin position="1"/>
        <end position="297"/>
    </location>
</feature>
<feature type="domain" description="FAD-binding PCMH-type" evidence="1">
    <location>
        <begin position="22"/>
        <end position="195"/>
    </location>
</feature>
<feature type="active site" evidence="1">
    <location>
        <position position="169"/>
    </location>
</feature>
<feature type="active site" description="Proton donor" evidence="1">
    <location>
        <position position="223"/>
    </location>
</feature>
<feature type="active site" evidence="1">
    <location>
        <position position="293"/>
    </location>
</feature>
<proteinExistence type="inferred from homology"/>
<accession>B9LKI9</accession>
<gene>
    <name evidence="1" type="primary">murB</name>
    <name type="ordered locus">Chy400_0816</name>
</gene>
<comment type="function">
    <text evidence="1">Cell wall formation.</text>
</comment>
<comment type="catalytic activity">
    <reaction evidence="1">
        <text>UDP-N-acetyl-alpha-D-muramate + NADP(+) = UDP-N-acetyl-3-O-(1-carboxyvinyl)-alpha-D-glucosamine + NADPH + H(+)</text>
        <dbReference type="Rhea" id="RHEA:12248"/>
        <dbReference type="ChEBI" id="CHEBI:15378"/>
        <dbReference type="ChEBI" id="CHEBI:57783"/>
        <dbReference type="ChEBI" id="CHEBI:58349"/>
        <dbReference type="ChEBI" id="CHEBI:68483"/>
        <dbReference type="ChEBI" id="CHEBI:70757"/>
        <dbReference type="EC" id="1.3.1.98"/>
    </reaction>
</comment>
<comment type="cofactor">
    <cofactor evidence="1">
        <name>FAD</name>
        <dbReference type="ChEBI" id="CHEBI:57692"/>
    </cofactor>
</comment>
<comment type="pathway">
    <text evidence="1">Cell wall biogenesis; peptidoglycan biosynthesis.</text>
</comment>
<comment type="subcellular location">
    <subcellularLocation>
        <location evidence="1">Cytoplasm</location>
    </subcellularLocation>
</comment>
<comment type="similarity">
    <text evidence="1">Belongs to the MurB family.</text>
</comment>